<proteinExistence type="evidence at transcript level"/>
<comment type="function">
    <text evidence="2">Folate transporter.</text>
</comment>
<comment type="subcellular location">
    <subcellularLocation>
        <location evidence="3">Membrane</location>
        <topology evidence="3">Multi-pass membrane protein</topology>
    </subcellularLocation>
</comment>
<comment type="tissue specificity">
    <text evidence="2">Highly expressed in pharynx and posterior part of the intestine. Expressed at lower levels in the body wall muscles, head muscles, and vulva muscles. Highly expressed in the intestine of the early larva, levels decrease in the later stages of development.</text>
</comment>
<comment type="disruption phenotype">
    <text evidence="2">Worms display defects in folate uptake, reproduction and movement.</text>
</comment>
<comment type="similarity">
    <text evidence="3">Belongs to the reduced folate carrier (RFC) transporter (TC 2.A.48) family.</text>
</comment>
<comment type="sequence caution" evidence="3">
    <conflict type="frameshift">
        <sequence resource="EMBL" id="CB397828"/>
    </conflict>
</comment>
<organism>
    <name type="scientific">Caenorhabditis elegans</name>
    <dbReference type="NCBI Taxonomy" id="6239"/>
    <lineage>
        <taxon>Eukaryota</taxon>
        <taxon>Metazoa</taxon>
        <taxon>Ecdysozoa</taxon>
        <taxon>Nematoda</taxon>
        <taxon>Chromadorea</taxon>
        <taxon>Rhabditida</taxon>
        <taxon>Rhabditina</taxon>
        <taxon>Rhabditomorpha</taxon>
        <taxon>Rhabditoidea</taxon>
        <taxon>Rhabditidae</taxon>
        <taxon>Peloderinae</taxon>
        <taxon>Caenorhabditis</taxon>
    </lineage>
</organism>
<evidence type="ECO:0000255" key="1"/>
<evidence type="ECO:0000269" key="2">
    <source>
    </source>
</evidence>
<evidence type="ECO:0000305" key="3"/>
<gene>
    <name type="primary">folt-1</name>
    <name type="synonym">tag-330</name>
    <name type="ORF">C06H2.4</name>
</gene>
<name>FOLT1_CAEEL</name>
<sequence length="453" mass="51077">MSWRTTTAILCLYGAVKEFRPATPFLTPFLASPEKNITLDELYSQVYPYWTYSYMLALIPMFILTDILRYKPIVMIEAIGLVATWALLVFGKGVWQMQIMQVSFGVASAAEIAYYSYIYSIVDRKHYKRATSYIRAAALMGKLVAFGLGQTLISTHTSDYLVLNQISLGAVCLVTIIAIFLPRVKSEKAKVSMRAHEIVEQQTVESVESVQTPKAVKMSYTREYFKKISEELQICSKNQELLKWSLWWALASCGVYQVQNYTQSLWKELQNNPDDVANGVVEFVNTALGAFLSLFIHHLSIDWTRHGQMILFITSAIVAVLLYLCSQTTTVLVAYSSYVVITSIYHMLITAASANVAKELSSNNHGLIFGCNTFVAVCLQSLLTLVVVDSRFLHLDIRTQFVIYSGYFALVASIFAFFFMISLFSKSSNAHTAQTTYEATNEIQEETVFLDQN</sequence>
<feature type="chain" id="PRO_0000178664" description="Folate transporter 1">
    <location>
        <begin position="1"/>
        <end position="453"/>
    </location>
</feature>
<feature type="transmembrane region" description="Helical" evidence="1">
    <location>
        <begin position="48"/>
        <end position="68"/>
    </location>
</feature>
<feature type="transmembrane region" description="Helical" evidence="1">
    <location>
        <begin position="73"/>
        <end position="93"/>
    </location>
</feature>
<feature type="transmembrane region" description="Helical" evidence="1">
    <location>
        <begin position="102"/>
        <end position="122"/>
    </location>
</feature>
<feature type="transmembrane region" description="Helical" evidence="1">
    <location>
        <begin position="136"/>
        <end position="156"/>
    </location>
</feature>
<feature type="transmembrane region" description="Helical" evidence="1">
    <location>
        <begin position="161"/>
        <end position="181"/>
    </location>
</feature>
<feature type="transmembrane region" description="Helical" evidence="1">
    <location>
        <begin position="276"/>
        <end position="296"/>
    </location>
</feature>
<feature type="transmembrane region" description="Helical" evidence="1">
    <location>
        <begin position="306"/>
        <end position="326"/>
    </location>
</feature>
<feature type="transmembrane region" description="Helical" evidence="1">
    <location>
        <begin position="331"/>
        <end position="351"/>
    </location>
</feature>
<feature type="transmembrane region" description="Helical" evidence="1">
    <location>
        <begin position="368"/>
        <end position="388"/>
    </location>
</feature>
<feature type="transmembrane region" description="Helical" evidence="1">
    <location>
        <begin position="401"/>
        <end position="421"/>
    </location>
</feature>
<feature type="glycosylation site" description="N-linked (GlcNAc...) asparagine" evidence="1">
    <location>
        <position position="36"/>
    </location>
</feature>
<feature type="glycosylation site" description="N-linked (GlcNAc...) asparagine" evidence="1">
    <location>
        <position position="260"/>
    </location>
</feature>
<feature type="sequence conflict" description="In Ref. 3; CB397828." evidence="3" ref="3">
    <original>PD</original>
    <variation>SE</variation>
    <location>
        <begin position="273"/>
        <end position="274"/>
    </location>
</feature>
<feature type="sequence conflict" description="In Ref. 3; CB397828." evidence="3" ref="3">
    <original>TA</original>
    <variation>KS</variation>
    <location>
        <begin position="286"/>
        <end position="287"/>
    </location>
</feature>
<feature type="sequence conflict" description="In Ref. 3; CB397828." evidence="3" ref="3">
    <original>L</original>
    <variation>I</variation>
    <location>
        <position position="292"/>
    </location>
</feature>
<feature type="sequence conflict" description="In Ref. 3; CB397828." evidence="3" ref="3">
    <original>I</original>
    <variation>M</variation>
    <location>
        <position position="301"/>
    </location>
</feature>
<feature type="sequence conflict" description="In Ref. 3; CB397828." evidence="3" ref="3">
    <original>TS</original>
    <variation>PY</variation>
    <location>
        <begin position="314"/>
        <end position="315"/>
    </location>
</feature>
<feature type="sequence conflict" description="In Ref. 3; CB397828." evidence="3" ref="3">
    <original>LC</original>
    <variation>IW</variation>
    <location>
        <begin position="324"/>
        <end position="325"/>
    </location>
</feature>
<feature type="sequence conflict" description="In Ref. 3; CB397828." evidence="3" ref="3">
    <original>T</original>
    <variation>S</variation>
    <location>
        <position position="330"/>
    </location>
</feature>
<feature type="sequence conflict" description="In Ref. 3; CB397828." evidence="3" ref="3">
    <original>L</original>
    <variation>M</variation>
    <location>
        <position position="332"/>
    </location>
</feature>
<feature type="sequence conflict" description="In Ref. 3; CB397828." evidence="3" ref="3">
    <original>A</original>
    <variation>G</variation>
    <location>
        <position position="334"/>
    </location>
</feature>
<feature type="sequence conflict" description="In Ref. 3; CB397828." evidence="3" ref="3">
    <original>S</original>
    <variation>Y</variation>
    <location>
        <position position="336"/>
    </location>
</feature>
<feature type="sequence conflict" description="In Ref. 3; CB397828." evidence="3" ref="3">
    <original>LITA</original>
    <variation>VRSV</variation>
    <location>
        <begin position="348"/>
        <end position="351"/>
    </location>
</feature>
<protein>
    <recommendedName>
        <fullName>Folate transporter 1</fullName>
    </recommendedName>
</protein>
<dbReference type="EMBL" id="EF409995">
    <property type="protein sequence ID" value="ABN58742.1"/>
    <property type="molecule type" value="mRNA"/>
</dbReference>
<dbReference type="EMBL" id="Z75526">
    <property type="protein sequence ID" value="CAA99770.3"/>
    <property type="molecule type" value="Genomic_DNA"/>
</dbReference>
<dbReference type="EMBL" id="CB397828">
    <property type="status" value="NOT_ANNOTATED_CDS"/>
    <property type="molecule type" value="mRNA"/>
</dbReference>
<dbReference type="PIR" id="T19024">
    <property type="entry name" value="T19024"/>
</dbReference>
<dbReference type="RefSeq" id="NP_505833.3">
    <property type="nucleotide sequence ID" value="NM_073432.5"/>
</dbReference>
<dbReference type="SMR" id="Q17766"/>
<dbReference type="FunCoup" id="Q17766">
    <property type="interactions" value="280"/>
</dbReference>
<dbReference type="STRING" id="6239.C06H2.4.1"/>
<dbReference type="TCDB" id="2.A.48.1.3">
    <property type="family name" value="the reduced folate carrier (rfc) family"/>
</dbReference>
<dbReference type="GlyCosmos" id="Q17766">
    <property type="glycosylation" value="2 sites, No reported glycans"/>
</dbReference>
<dbReference type="PaxDb" id="6239-C06H2.4"/>
<dbReference type="EnsemblMetazoa" id="C06H2.4.1">
    <property type="protein sequence ID" value="C06H2.4.1"/>
    <property type="gene ID" value="WBGene00007388"/>
</dbReference>
<dbReference type="GeneID" id="179544"/>
<dbReference type="KEGG" id="cel:CELE_C06H2.4"/>
<dbReference type="UCSC" id="C06H2.4">
    <property type="organism name" value="c. elegans"/>
</dbReference>
<dbReference type="AGR" id="WB:WBGene00007388"/>
<dbReference type="CTD" id="179544"/>
<dbReference type="WormBase" id="C06H2.4">
    <property type="protein sequence ID" value="CE47283"/>
    <property type="gene ID" value="WBGene00007388"/>
    <property type="gene designation" value="folt-1"/>
</dbReference>
<dbReference type="eggNOG" id="KOG3810">
    <property type="taxonomic scope" value="Eukaryota"/>
</dbReference>
<dbReference type="GeneTree" id="ENSGT00950000183022"/>
<dbReference type="HOGENOM" id="CLU_036909_0_1_1"/>
<dbReference type="InParanoid" id="Q17766"/>
<dbReference type="OMA" id="DIWACYA"/>
<dbReference type="OrthoDB" id="18814at2759"/>
<dbReference type="PhylomeDB" id="Q17766"/>
<dbReference type="Reactome" id="R-CEL-196757">
    <property type="pathway name" value="Metabolism of folate and pterines"/>
</dbReference>
<dbReference type="Reactome" id="R-CEL-196819">
    <property type="pathway name" value="Vitamin B1 (thiamin) metabolism"/>
</dbReference>
<dbReference type="PRO" id="PR:Q17766"/>
<dbReference type="Proteomes" id="UP000001940">
    <property type="component" value="Chromosome V"/>
</dbReference>
<dbReference type="Bgee" id="WBGene00007388">
    <property type="expression patterns" value="Expressed in pharyngeal muscle cell (C elegans) and 3 other cell types or tissues"/>
</dbReference>
<dbReference type="GO" id="GO:0005886">
    <property type="term" value="C:plasma membrane"/>
    <property type="evidence" value="ECO:0000318"/>
    <property type="project" value="GO_Central"/>
</dbReference>
<dbReference type="GO" id="GO:0005542">
    <property type="term" value="F:folic acid binding"/>
    <property type="evidence" value="ECO:0007669"/>
    <property type="project" value="UniProtKB-KW"/>
</dbReference>
<dbReference type="GO" id="GO:0090482">
    <property type="term" value="F:vitamin transmembrane transporter activity"/>
    <property type="evidence" value="ECO:0007669"/>
    <property type="project" value="InterPro"/>
</dbReference>
<dbReference type="GO" id="GO:0055085">
    <property type="term" value="P:transmembrane transport"/>
    <property type="evidence" value="ECO:0000318"/>
    <property type="project" value="GO_Central"/>
</dbReference>
<dbReference type="FunFam" id="1.20.1250.20:FF:000298">
    <property type="entry name" value="Thiamine transporter"/>
    <property type="match status" value="1"/>
</dbReference>
<dbReference type="Gene3D" id="1.20.1250.20">
    <property type="entry name" value="MFS general substrate transporter like domains"/>
    <property type="match status" value="1"/>
</dbReference>
<dbReference type="InterPro" id="IPR002666">
    <property type="entry name" value="Folate_carrier"/>
</dbReference>
<dbReference type="InterPro" id="IPR036259">
    <property type="entry name" value="MFS_trans_sf"/>
</dbReference>
<dbReference type="NCBIfam" id="TIGR00806">
    <property type="entry name" value="rfc"/>
    <property type="match status" value="1"/>
</dbReference>
<dbReference type="PANTHER" id="PTHR10686">
    <property type="entry name" value="FOLATE TRANSPORTER"/>
    <property type="match status" value="1"/>
</dbReference>
<dbReference type="PANTHER" id="PTHR10686:SF20">
    <property type="entry name" value="FOLATE TRANSPORTER 1"/>
    <property type="match status" value="1"/>
</dbReference>
<dbReference type="Pfam" id="PF01770">
    <property type="entry name" value="Folate_carrier"/>
    <property type="match status" value="1"/>
</dbReference>
<dbReference type="PIRSF" id="PIRSF028739">
    <property type="entry name" value="Folate_carrier"/>
    <property type="match status" value="1"/>
</dbReference>
<dbReference type="SUPFAM" id="SSF103473">
    <property type="entry name" value="MFS general substrate transporter"/>
    <property type="match status" value="1"/>
</dbReference>
<keyword id="KW-0290">Folate-binding</keyword>
<keyword id="KW-0325">Glycoprotein</keyword>
<keyword id="KW-0472">Membrane</keyword>
<keyword id="KW-1185">Reference proteome</keyword>
<keyword id="KW-0812">Transmembrane</keyword>
<keyword id="KW-1133">Transmembrane helix</keyword>
<keyword id="KW-0813">Transport</keyword>
<accession>Q17766</accession>
<accession>A3FMP6</accession>
<reference key="1">
    <citation type="journal article" date="2007" name="Am. J. Physiol.">
        <title>Cloning and functional characterization of a folate transporter from the nematode Caenorhabditis elegans.</title>
        <authorList>
            <person name="Balamurugan K."/>
            <person name="Ashokkumar B."/>
            <person name="Moussaif M."/>
            <person name="Sze J.Y."/>
            <person name="Said H.M."/>
        </authorList>
    </citation>
    <scope>NUCLEOTIDE SEQUENCE [MRNA]</scope>
    <scope>FUNCTION</scope>
    <scope>TISSUE SPECIFICITY</scope>
    <scope>DISRUPTION PHENOTYPE</scope>
    <source>
        <strain>Bristol N2</strain>
    </source>
</reference>
<reference key="2">
    <citation type="journal article" date="1998" name="Science">
        <title>Genome sequence of the nematode C. elegans: a platform for investigating biology.</title>
        <authorList>
            <consortium name="The C. elegans sequencing consortium"/>
        </authorList>
    </citation>
    <scope>NUCLEOTIDE SEQUENCE [LARGE SCALE GENOMIC DNA]</scope>
    <source>
        <strain>Bristol N2</strain>
    </source>
</reference>
<reference key="3">
    <citation type="journal article" date="2003" name="Nat. Genet.">
        <title>C. elegans ORFeome version 1.1: experimental verification of the genome annotation and resource for proteome-scale protein expression.</title>
        <authorList>
            <person name="Reboul J."/>
            <person name="Vaglio P."/>
            <person name="Rual J.F."/>
            <person name="Lamesch P."/>
            <person name="Martinez M."/>
            <person name="Armstrong C.M."/>
            <person name="Li S."/>
            <person name="Jacotot L."/>
            <person name="Bertin N."/>
            <person name="Janky R."/>
            <person name="Moore T."/>
            <person name="Hudson J.R. Jr."/>
            <person name="Hartley J.L."/>
            <person name="Brasch M.A."/>
            <person name="Vandenhaute J."/>
            <person name="Boulton S."/>
            <person name="Endress G.A."/>
            <person name="Jenna S."/>
            <person name="Chevet E."/>
            <person name="Papasotiropoulos V."/>
            <person name="Tolias P.P."/>
            <person name="Ptacek J."/>
            <person name="Snyder M."/>
            <person name="Huang R."/>
            <person name="Chance M.R."/>
            <person name="Lee H."/>
            <person name="Doucette-Stamm L."/>
            <person name="Hill D.E."/>
            <person name="Vidal M."/>
        </authorList>
    </citation>
    <scope>NUCLEOTIDE SEQUENCE [MRNA] OF 267-395</scope>
</reference>